<sequence length="361" mass="39118">MAGNSIGQIFRVTTFGESHGVALGCIVDGVPPGIPLTEADLQHDLDRRRPGTSRYTTQRREPDQVRILSGVFEGVTTGTSIGLIIENTDQRSQDYGAIKDVFRPGHADYTYEQKYGVRDYRGGGRSSARETAMRVAAGAIAKKYLQQKFGVQVRGYLAQIGDVVCELKDWEQVEQNPFFCPDPDKLEALDELMRALKKEGDSIGAKVSVVAENVPVGLGEPVFDRLDADLAHALMSINAVKGVEIGDGFSVVTKRGSENRDEITPEGFQSNHAGGILGGISSGQAVIAHLALKPTSSIMVPGRTINRQGEAVEMVTRGRHDPCVGIRAVPIAEAMMAIVLMDHLLRQRAQNGDVVSNVPRW</sequence>
<gene>
    <name evidence="1" type="primary">aroC</name>
    <name type="ordered locus">Spro_3374</name>
</gene>
<evidence type="ECO:0000255" key="1">
    <source>
        <dbReference type="HAMAP-Rule" id="MF_00300"/>
    </source>
</evidence>
<evidence type="ECO:0000256" key="2">
    <source>
        <dbReference type="SAM" id="MobiDB-lite"/>
    </source>
</evidence>
<feature type="chain" id="PRO_1000059314" description="Chorismate synthase">
    <location>
        <begin position="1"/>
        <end position="361"/>
    </location>
</feature>
<feature type="region of interest" description="Disordered" evidence="2">
    <location>
        <begin position="37"/>
        <end position="59"/>
    </location>
</feature>
<feature type="compositionally biased region" description="Basic and acidic residues" evidence="2">
    <location>
        <begin position="40"/>
        <end position="49"/>
    </location>
</feature>
<feature type="binding site" evidence="1">
    <location>
        <position position="48"/>
    </location>
    <ligand>
        <name>NADP(+)</name>
        <dbReference type="ChEBI" id="CHEBI:58349"/>
    </ligand>
</feature>
<feature type="binding site" evidence="1">
    <location>
        <position position="54"/>
    </location>
    <ligand>
        <name>NADP(+)</name>
        <dbReference type="ChEBI" id="CHEBI:58349"/>
    </ligand>
</feature>
<feature type="binding site" evidence="1">
    <location>
        <begin position="125"/>
        <end position="127"/>
    </location>
    <ligand>
        <name>FMN</name>
        <dbReference type="ChEBI" id="CHEBI:58210"/>
    </ligand>
</feature>
<feature type="binding site" evidence="1">
    <location>
        <begin position="238"/>
        <end position="239"/>
    </location>
    <ligand>
        <name>FMN</name>
        <dbReference type="ChEBI" id="CHEBI:58210"/>
    </ligand>
</feature>
<feature type="binding site" evidence="1">
    <location>
        <position position="278"/>
    </location>
    <ligand>
        <name>FMN</name>
        <dbReference type="ChEBI" id="CHEBI:58210"/>
    </ligand>
</feature>
<feature type="binding site" evidence="1">
    <location>
        <begin position="293"/>
        <end position="297"/>
    </location>
    <ligand>
        <name>FMN</name>
        <dbReference type="ChEBI" id="CHEBI:58210"/>
    </ligand>
</feature>
<feature type="binding site" evidence="1">
    <location>
        <position position="319"/>
    </location>
    <ligand>
        <name>FMN</name>
        <dbReference type="ChEBI" id="CHEBI:58210"/>
    </ligand>
</feature>
<accession>A8GH82</accession>
<organism>
    <name type="scientific">Serratia proteamaculans (strain 568)</name>
    <dbReference type="NCBI Taxonomy" id="399741"/>
    <lineage>
        <taxon>Bacteria</taxon>
        <taxon>Pseudomonadati</taxon>
        <taxon>Pseudomonadota</taxon>
        <taxon>Gammaproteobacteria</taxon>
        <taxon>Enterobacterales</taxon>
        <taxon>Yersiniaceae</taxon>
        <taxon>Serratia</taxon>
    </lineage>
</organism>
<protein>
    <recommendedName>
        <fullName evidence="1">Chorismate synthase</fullName>
        <shortName evidence="1">CS</shortName>
        <ecNumber evidence="1">4.2.3.5</ecNumber>
    </recommendedName>
    <alternativeName>
        <fullName evidence="1">5-enolpyruvylshikimate-3-phosphate phospholyase</fullName>
    </alternativeName>
</protein>
<comment type="function">
    <text evidence="1">Catalyzes the anti-1,4-elimination of the C-3 phosphate and the C-6 proR hydrogen from 5-enolpyruvylshikimate-3-phosphate (EPSP) to yield chorismate, which is the branch point compound that serves as the starting substrate for the three terminal pathways of aromatic amino acid biosynthesis. This reaction introduces a second double bond into the aromatic ring system.</text>
</comment>
<comment type="catalytic activity">
    <reaction evidence="1">
        <text>5-O-(1-carboxyvinyl)-3-phosphoshikimate = chorismate + phosphate</text>
        <dbReference type="Rhea" id="RHEA:21020"/>
        <dbReference type="ChEBI" id="CHEBI:29748"/>
        <dbReference type="ChEBI" id="CHEBI:43474"/>
        <dbReference type="ChEBI" id="CHEBI:57701"/>
        <dbReference type="EC" id="4.2.3.5"/>
    </reaction>
</comment>
<comment type="cofactor">
    <cofactor evidence="1">
        <name>FMNH2</name>
        <dbReference type="ChEBI" id="CHEBI:57618"/>
    </cofactor>
    <text evidence="1">Reduced FMN (FMNH(2)).</text>
</comment>
<comment type="pathway">
    <text evidence="1">Metabolic intermediate biosynthesis; chorismate biosynthesis; chorismate from D-erythrose 4-phosphate and phosphoenolpyruvate: step 7/7.</text>
</comment>
<comment type="subunit">
    <text evidence="1">Homotetramer.</text>
</comment>
<comment type="similarity">
    <text evidence="1">Belongs to the chorismate synthase family.</text>
</comment>
<proteinExistence type="inferred from homology"/>
<name>AROC_SERP5</name>
<keyword id="KW-0028">Amino-acid biosynthesis</keyword>
<keyword id="KW-0057">Aromatic amino acid biosynthesis</keyword>
<keyword id="KW-0274">FAD</keyword>
<keyword id="KW-0285">Flavoprotein</keyword>
<keyword id="KW-0288">FMN</keyword>
<keyword id="KW-0456">Lyase</keyword>
<keyword id="KW-0521">NADP</keyword>
<reference key="1">
    <citation type="submission" date="2007-09" db="EMBL/GenBank/DDBJ databases">
        <title>Complete sequence of chromosome of Serratia proteamaculans 568.</title>
        <authorList>
            <consortium name="US DOE Joint Genome Institute"/>
            <person name="Copeland A."/>
            <person name="Lucas S."/>
            <person name="Lapidus A."/>
            <person name="Barry K."/>
            <person name="Glavina del Rio T."/>
            <person name="Dalin E."/>
            <person name="Tice H."/>
            <person name="Pitluck S."/>
            <person name="Chain P."/>
            <person name="Malfatti S."/>
            <person name="Shin M."/>
            <person name="Vergez L."/>
            <person name="Schmutz J."/>
            <person name="Larimer F."/>
            <person name="Land M."/>
            <person name="Hauser L."/>
            <person name="Kyrpides N."/>
            <person name="Kim E."/>
            <person name="Taghavi S."/>
            <person name="Newman L."/>
            <person name="Vangronsveld J."/>
            <person name="van der Lelie D."/>
            <person name="Richardson P."/>
        </authorList>
    </citation>
    <scope>NUCLEOTIDE SEQUENCE [LARGE SCALE GENOMIC DNA]</scope>
    <source>
        <strain>568</strain>
    </source>
</reference>
<dbReference type="EC" id="4.2.3.5" evidence="1"/>
<dbReference type="EMBL" id="CP000826">
    <property type="protein sequence ID" value="ABV42472.1"/>
    <property type="molecule type" value="Genomic_DNA"/>
</dbReference>
<dbReference type="SMR" id="A8GH82"/>
<dbReference type="STRING" id="399741.Spro_3374"/>
<dbReference type="KEGG" id="spe:Spro_3374"/>
<dbReference type="eggNOG" id="COG0082">
    <property type="taxonomic scope" value="Bacteria"/>
</dbReference>
<dbReference type="HOGENOM" id="CLU_034547_0_2_6"/>
<dbReference type="OrthoDB" id="9771806at2"/>
<dbReference type="UniPathway" id="UPA00053">
    <property type="reaction ID" value="UER00090"/>
</dbReference>
<dbReference type="GO" id="GO:0005829">
    <property type="term" value="C:cytosol"/>
    <property type="evidence" value="ECO:0007669"/>
    <property type="project" value="TreeGrafter"/>
</dbReference>
<dbReference type="GO" id="GO:0004107">
    <property type="term" value="F:chorismate synthase activity"/>
    <property type="evidence" value="ECO:0007669"/>
    <property type="project" value="UniProtKB-UniRule"/>
</dbReference>
<dbReference type="GO" id="GO:0010181">
    <property type="term" value="F:FMN binding"/>
    <property type="evidence" value="ECO:0007669"/>
    <property type="project" value="TreeGrafter"/>
</dbReference>
<dbReference type="GO" id="GO:0008652">
    <property type="term" value="P:amino acid biosynthetic process"/>
    <property type="evidence" value="ECO:0007669"/>
    <property type="project" value="UniProtKB-KW"/>
</dbReference>
<dbReference type="GO" id="GO:0009073">
    <property type="term" value="P:aromatic amino acid family biosynthetic process"/>
    <property type="evidence" value="ECO:0007669"/>
    <property type="project" value="UniProtKB-KW"/>
</dbReference>
<dbReference type="GO" id="GO:0009423">
    <property type="term" value="P:chorismate biosynthetic process"/>
    <property type="evidence" value="ECO:0007669"/>
    <property type="project" value="UniProtKB-UniRule"/>
</dbReference>
<dbReference type="CDD" id="cd07304">
    <property type="entry name" value="Chorismate_synthase"/>
    <property type="match status" value="1"/>
</dbReference>
<dbReference type="FunFam" id="3.60.150.10:FF:000001">
    <property type="entry name" value="Chorismate synthase"/>
    <property type="match status" value="1"/>
</dbReference>
<dbReference type="Gene3D" id="3.60.150.10">
    <property type="entry name" value="Chorismate synthase AroC"/>
    <property type="match status" value="1"/>
</dbReference>
<dbReference type="HAMAP" id="MF_00300">
    <property type="entry name" value="Chorismate_synth"/>
    <property type="match status" value="1"/>
</dbReference>
<dbReference type="InterPro" id="IPR000453">
    <property type="entry name" value="Chorismate_synth"/>
</dbReference>
<dbReference type="InterPro" id="IPR035904">
    <property type="entry name" value="Chorismate_synth_AroC_sf"/>
</dbReference>
<dbReference type="InterPro" id="IPR020541">
    <property type="entry name" value="Chorismate_synthase_CS"/>
</dbReference>
<dbReference type="NCBIfam" id="TIGR00033">
    <property type="entry name" value="aroC"/>
    <property type="match status" value="1"/>
</dbReference>
<dbReference type="NCBIfam" id="NF003793">
    <property type="entry name" value="PRK05382.1"/>
    <property type="match status" value="1"/>
</dbReference>
<dbReference type="PANTHER" id="PTHR21085">
    <property type="entry name" value="CHORISMATE SYNTHASE"/>
    <property type="match status" value="1"/>
</dbReference>
<dbReference type="PANTHER" id="PTHR21085:SF0">
    <property type="entry name" value="CHORISMATE SYNTHASE"/>
    <property type="match status" value="1"/>
</dbReference>
<dbReference type="Pfam" id="PF01264">
    <property type="entry name" value="Chorismate_synt"/>
    <property type="match status" value="1"/>
</dbReference>
<dbReference type="PIRSF" id="PIRSF001456">
    <property type="entry name" value="Chorismate_synth"/>
    <property type="match status" value="1"/>
</dbReference>
<dbReference type="SUPFAM" id="SSF103263">
    <property type="entry name" value="Chorismate synthase, AroC"/>
    <property type="match status" value="1"/>
</dbReference>
<dbReference type="PROSITE" id="PS00787">
    <property type="entry name" value="CHORISMATE_SYNTHASE_1"/>
    <property type="match status" value="1"/>
</dbReference>
<dbReference type="PROSITE" id="PS00788">
    <property type="entry name" value="CHORISMATE_SYNTHASE_2"/>
    <property type="match status" value="1"/>
</dbReference>
<dbReference type="PROSITE" id="PS00789">
    <property type="entry name" value="CHORISMATE_SYNTHASE_3"/>
    <property type="match status" value="1"/>
</dbReference>